<proteinExistence type="inferred from homology"/>
<keyword id="KW-1003">Cell membrane</keyword>
<keyword id="KW-0407">Ion channel</keyword>
<keyword id="KW-0406">Ion transport</keyword>
<keyword id="KW-0472">Membrane</keyword>
<keyword id="KW-0479">Metal-binding</keyword>
<keyword id="KW-1185">Reference proteome</keyword>
<keyword id="KW-0915">Sodium</keyword>
<keyword id="KW-0812">Transmembrane</keyword>
<keyword id="KW-1133">Transmembrane helix</keyword>
<keyword id="KW-0813">Transport</keyword>
<comment type="function">
    <text evidence="1">Fluoride-specific ion channel. Important for reducing fluoride concentration in the cell, thus reducing its toxicity.</text>
</comment>
<comment type="catalytic activity">
    <reaction evidence="1">
        <text>fluoride(in) = fluoride(out)</text>
        <dbReference type="Rhea" id="RHEA:76159"/>
        <dbReference type="ChEBI" id="CHEBI:17051"/>
    </reaction>
    <physiologicalReaction direction="left-to-right" evidence="1">
        <dbReference type="Rhea" id="RHEA:76160"/>
    </physiologicalReaction>
</comment>
<comment type="activity regulation">
    <text evidence="1">Na(+) is not transported, but it plays an essential structural role and its presence is essential for fluoride channel function.</text>
</comment>
<comment type="subcellular location">
    <subcellularLocation>
        <location evidence="1">Cell membrane</location>
        <topology evidence="1">Multi-pass membrane protein</topology>
    </subcellularLocation>
</comment>
<comment type="similarity">
    <text evidence="1">Belongs to the fluoride channel Fluc/FEX (TC 1.A.43) family.</text>
</comment>
<dbReference type="EMBL" id="CP000866">
    <property type="protein sequence ID" value="ABX11915.1"/>
    <property type="molecule type" value="Genomic_DNA"/>
</dbReference>
<dbReference type="RefSeq" id="WP_012214402.1">
    <property type="nucleotide sequence ID" value="NC_010085.1"/>
</dbReference>
<dbReference type="SMR" id="A9A506"/>
<dbReference type="STRING" id="436308.Nmar_0015"/>
<dbReference type="EnsemblBacteria" id="ABX11915">
    <property type="protein sequence ID" value="ABX11915"/>
    <property type="gene ID" value="Nmar_0015"/>
</dbReference>
<dbReference type="GeneID" id="5773610"/>
<dbReference type="KEGG" id="nmr:Nmar_0015"/>
<dbReference type="eggNOG" id="arCOG04701">
    <property type="taxonomic scope" value="Archaea"/>
</dbReference>
<dbReference type="HOGENOM" id="CLU_114342_3_1_2"/>
<dbReference type="InParanoid" id="A9A506"/>
<dbReference type="OrthoDB" id="253428at2157"/>
<dbReference type="PhylomeDB" id="A9A506"/>
<dbReference type="Proteomes" id="UP000000792">
    <property type="component" value="Chromosome"/>
</dbReference>
<dbReference type="GO" id="GO:0005886">
    <property type="term" value="C:plasma membrane"/>
    <property type="evidence" value="ECO:0007669"/>
    <property type="project" value="UniProtKB-SubCell"/>
</dbReference>
<dbReference type="GO" id="GO:0062054">
    <property type="term" value="F:fluoride channel activity"/>
    <property type="evidence" value="ECO:0007669"/>
    <property type="project" value="UniProtKB-UniRule"/>
</dbReference>
<dbReference type="GO" id="GO:0046872">
    <property type="term" value="F:metal ion binding"/>
    <property type="evidence" value="ECO:0007669"/>
    <property type="project" value="UniProtKB-KW"/>
</dbReference>
<dbReference type="GO" id="GO:0140114">
    <property type="term" value="P:cellular detoxification of fluoride"/>
    <property type="evidence" value="ECO:0007669"/>
    <property type="project" value="UniProtKB-UniRule"/>
</dbReference>
<dbReference type="HAMAP" id="MF_00454">
    <property type="entry name" value="FluC"/>
    <property type="match status" value="1"/>
</dbReference>
<dbReference type="InterPro" id="IPR003691">
    <property type="entry name" value="FluC"/>
</dbReference>
<dbReference type="NCBIfam" id="TIGR00494">
    <property type="entry name" value="crcB"/>
    <property type="match status" value="1"/>
</dbReference>
<dbReference type="PANTHER" id="PTHR28259">
    <property type="entry name" value="FLUORIDE EXPORT PROTEIN 1-RELATED"/>
    <property type="match status" value="1"/>
</dbReference>
<dbReference type="PANTHER" id="PTHR28259:SF1">
    <property type="entry name" value="FLUORIDE EXPORT PROTEIN 1-RELATED"/>
    <property type="match status" value="1"/>
</dbReference>
<dbReference type="Pfam" id="PF02537">
    <property type="entry name" value="CRCB"/>
    <property type="match status" value="1"/>
</dbReference>
<reference key="1">
    <citation type="journal article" date="2010" name="Proc. Natl. Acad. Sci. U.S.A.">
        <title>Nitrosopumilus maritimus genome reveals unique mechanisms for nitrification and autotrophy in globally distributed marine crenarchaea.</title>
        <authorList>
            <person name="Walker C.B."/>
            <person name="de la Torre J.R."/>
            <person name="Klotz M.G."/>
            <person name="Urakawa H."/>
            <person name="Pinel N."/>
            <person name="Arp D.J."/>
            <person name="Brochier-Armanet C."/>
            <person name="Chain P.S."/>
            <person name="Chan P.P."/>
            <person name="Gollabgir A."/>
            <person name="Hemp J."/>
            <person name="Hugler M."/>
            <person name="Karr E.A."/>
            <person name="Konneke M."/>
            <person name="Shin M."/>
            <person name="Lawton T.J."/>
            <person name="Lowe T."/>
            <person name="Martens-Habbena W."/>
            <person name="Sayavedra-Soto L.A."/>
            <person name="Lang D."/>
            <person name="Sievert S.M."/>
            <person name="Rosenzweig A.C."/>
            <person name="Manning G."/>
            <person name="Stahl D.A."/>
        </authorList>
    </citation>
    <scope>NUCLEOTIDE SEQUENCE [LARGE SCALE GENOMIC DNA]</scope>
    <source>
        <strain>SCM1</strain>
    </source>
</reference>
<accession>A9A506</accession>
<sequence>MKGLEFVFLAAGSVLGAFLRYKITESPLIFNTLPLNVLIVNVIGAFILGVFIVLSQQWNLDGRYSLFAAIGFCGSLTTMSSFALDSSNLLENNQYGALAANIIVNVGLSIGALIGGKSLMSTIISN</sequence>
<evidence type="ECO:0000255" key="1">
    <source>
        <dbReference type="HAMAP-Rule" id="MF_00454"/>
    </source>
</evidence>
<protein>
    <recommendedName>
        <fullName evidence="1">Fluoride-specific ion channel FluC</fullName>
    </recommendedName>
</protein>
<gene>
    <name evidence="1" type="primary">fluC</name>
    <name evidence="1" type="synonym">crcB</name>
    <name type="ordered locus">Nmar_0015</name>
</gene>
<name>FLUC_NITMS</name>
<organism>
    <name type="scientific">Nitrosopumilus maritimus (strain SCM1)</name>
    <dbReference type="NCBI Taxonomy" id="436308"/>
    <lineage>
        <taxon>Archaea</taxon>
        <taxon>Nitrososphaerota</taxon>
        <taxon>Nitrososphaeria</taxon>
        <taxon>Nitrosopumilales</taxon>
        <taxon>Nitrosopumilaceae</taxon>
        <taxon>Nitrosopumilus</taxon>
    </lineage>
</organism>
<feature type="chain" id="PRO_1000206255" description="Fluoride-specific ion channel FluC">
    <location>
        <begin position="1"/>
        <end position="126"/>
    </location>
</feature>
<feature type="transmembrane region" description="Helical" evidence="1">
    <location>
        <begin position="33"/>
        <end position="53"/>
    </location>
</feature>
<feature type="transmembrane region" description="Helical" evidence="1">
    <location>
        <begin position="64"/>
        <end position="84"/>
    </location>
</feature>
<feature type="transmembrane region" description="Helical" evidence="1">
    <location>
        <begin position="96"/>
        <end position="116"/>
    </location>
</feature>
<feature type="binding site" evidence="1">
    <location>
        <position position="74"/>
    </location>
    <ligand>
        <name>Na(+)</name>
        <dbReference type="ChEBI" id="CHEBI:29101"/>
        <note>structural</note>
    </ligand>
</feature>
<feature type="binding site" evidence="1">
    <location>
        <position position="77"/>
    </location>
    <ligand>
        <name>Na(+)</name>
        <dbReference type="ChEBI" id="CHEBI:29101"/>
        <note>structural</note>
    </ligand>
</feature>